<reference key="1">
    <citation type="submission" date="2006-03" db="EMBL/GenBank/DDBJ databases">
        <title>Complete sequence of Methylobacillus flagellatus KT.</title>
        <authorList>
            <consortium name="US DOE Joint Genome Institute"/>
            <person name="Copeland A."/>
            <person name="Lucas S."/>
            <person name="Lapidus A."/>
            <person name="Barry K."/>
            <person name="Detter J.C."/>
            <person name="Glavina del Rio T."/>
            <person name="Hammon N."/>
            <person name="Israni S."/>
            <person name="Dalin E."/>
            <person name="Tice H."/>
            <person name="Pitluck S."/>
            <person name="Brettin T."/>
            <person name="Bruce D."/>
            <person name="Han C."/>
            <person name="Tapia R."/>
            <person name="Saunders E."/>
            <person name="Gilna P."/>
            <person name="Schmutz J."/>
            <person name="Larimer F."/>
            <person name="Land M."/>
            <person name="Kyrpides N."/>
            <person name="Anderson I."/>
            <person name="Richardson P."/>
        </authorList>
    </citation>
    <scope>NUCLEOTIDE SEQUENCE [LARGE SCALE GENOMIC DNA]</scope>
    <source>
        <strain>ATCC 51484 / DSM 6875 / VKM B-1610 / KT</strain>
    </source>
</reference>
<evidence type="ECO:0000255" key="1">
    <source>
        <dbReference type="HAMAP-Rule" id="MF_01026"/>
    </source>
</evidence>
<name>LEUC_METFK</name>
<gene>
    <name evidence="1" type="primary">leuC</name>
    <name type="ordered locus">Mfla_1705</name>
</gene>
<dbReference type="EC" id="4.2.1.33" evidence="1"/>
<dbReference type="EMBL" id="CP000284">
    <property type="protein sequence ID" value="ABE49973.1"/>
    <property type="molecule type" value="Genomic_DNA"/>
</dbReference>
<dbReference type="RefSeq" id="WP_011479927.1">
    <property type="nucleotide sequence ID" value="NC_007947.1"/>
</dbReference>
<dbReference type="SMR" id="Q1H0L4"/>
<dbReference type="STRING" id="265072.Mfla_1705"/>
<dbReference type="KEGG" id="mfa:Mfla_1705"/>
<dbReference type="eggNOG" id="COG0065">
    <property type="taxonomic scope" value="Bacteria"/>
</dbReference>
<dbReference type="HOGENOM" id="CLU_006714_3_4_4"/>
<dbReference type="OrthoDB" id="9802769at2"/>
<dbReference type="UniPathway" id="UPA00048">
    <property type="reaction ID" value="UER00071"/>
</dbReference>
<dbReference type="Proteomes" id="UP000002440">
    <property type="component" value="Chromosome"/>
</dbReference>
<dbReference type="GO" id="GO:0003861">
    <property type="term" value="F:3-isopropylmalate dehydratase activity"/>
    <property type="evidence" value="ECO:0007669"/>
    <property type="project" value="UniProtKB-UniRule"/>
</dbReference>
<dbReference type="GO" id="GO:0051539">
    <property type="term" value="F:4 iron, 4 sulfur cluster binding"/>
    <property type="evidence" value="ECO:0007669"/>
    <property type="project" value="UniProtKB-KW"/>
</dbReference>
<dbReference type="GO" id="GO:0046872">
    <property type="term" value="F:metal ion binding"/>
    <property type="evidence" value="ECO:0007669"/>
    <property type="project" value="UniProtKB-KW"/>
</dbReference>
<dbReference type="GO" id="GO:0009098">
    <property type="term" value="P:L-leucine biosynthetic process"/>
    <property type="evidence" value="ECO:0007669"/>
    <property type="project" value="UniProtKB-UniRule"/>
</dbReference>
<dbReference type="CDD" id="cd01583">
    <property type="entry name" value="IPMI"/>
    <property type="match status" value="1"/>
</dbReference>
<dbReference type="FunFam" id="3.30.499.10:FF:000007">
    <property type="entry name" value="3-isopropylmalate dehydratase large subunit"/>
    <property type="match status" value="1"/>
</dbReference>
<dbReference type="Gene3D" id="3.30.499.10">
    <property type="entry name" value="Aconitase, domain 3"/>
    <property type="match status" value="2"/>
</dbReference>
<dbReference type="HAMAP" id="MF_01026">
    <property type="entry name" value="LeuC_type1"/>
    <property type="match status" value="1"/>
</dbReference>
<dbReference type="InterPro" id="IPR004430">
    <property type="entry name" value="3-IsopropMal_deHydase_lsu"/>
</dbReference>
<dbReference type="InterPro" id="IPR015931">
    <property type="entry name" value="Acnase/IPM_dHydase_lsu_aba_1/3"/>
</dbReference>
<dbReference type="InterPro" id="IPR001030">
    <property type="entry name" value="Acoase/IPM_deHydtase_lsu_aba"/>
</dbReference>
<dbReference type="InterPro" id="IPR018136">
    <property type="entry name" value="Aconitase_4Fe-4S_BS"/>
</dbReference>
<dbReference type="InterPro" id="IPR036008">
    <property type="entry name" value="Aconitase_4Fe-4S_dom"/>
</dbReference>
<dbReference type="InterPro" id="IPR050067">
    <property type="entry name" value="IPM_dehydratase_rel_enz"/>
</dbReference>
<dbReference type="InterPro" id="IPR033941">
    <property type="entry name" value="IPMI_cat"/>
</dbReference>
<dbReference type="NCBIfam" id="TIGR00170">
    <property type="entry name" value="leuC"/>
    <property type="match status" value="1"/>
</dbReference>
<dbReference type="NCBIfam" id="NF004016">
    <property type="entry name" value="PRK05478.1"/>
    <property type="match status" value="1"/>
</dbReference>
<dbReference type="NCBIfam" id="NF009116">
    <property type="entry name" value="PRK12466.1"/>
    <property type="match status" value="1"/>
</dbReference>
<dbReference type="PANTHER" id="PTHR43822:SF9">
    <property type="entry name" value="3-ISOPROPYLMALATE DEHYDRATASE"/>
    <property type="match status" value="1"/>
</dbReference>
<dbReference type="PANTHER" id="PTHR43822">
    <property type="entry name" value="HOMOACONITASE, MITOCHONDRIAL-RELATED"/>
    <property type="match status" value="1"/>
</dbReference>
<dbReference type="Pfam" id="PF00330">
    <property type="entry name" value="Aconitase"/>
    <property type="match status" value="1"/>
</dbReference>
<dbReference type="PRINTS" id="PR00415">
    <property type="entry name" value="ACONITASE"/>
</dbReference>
<dbReference type="SUPFAM" id="SSF53732">
    <property type="entry name" value="Aconitase iron-sulfur domain"/>
    <property type="match status" value="1"/>
</dbReference>
<dbReference type="PROSITE" id="PS00450">
    <property type="entry name" value="ACONITASE_1"/>
    <property type="match status" value="1"/>
</dbReference>
<dbReference type="PROSITE" id="PS01244">
    <property type="entry name" value="ACONITASE_2"/>
    <property type="match status" value="1"/>
</dbReference>
<accession>Q1H0L4</accession>
<feature type="chain" id="PRO_1000063571" description="3-isopropylmalate dehydratase large subunit">
    <location>
        <begin position="1"/>
        <end position="468"/>
    </location>
</feature>
<feature type="binding site" evidence="1">
    <location>
        <position position="347"/>
    </location>
    <ligand>
        <name>[4Fe-4S] cluster</name>
        <dbReference type="ChEBI" id="CHEBI:49883"/>
    </ligand>
</feature>
<feature type="binding site" evidence="1">
    <location>
        <position position="408"/>
    </location>
    <ligand>
        <name>[4Fe-4S] cluster</name>
        <dbReference type="ChEBI" id="CHEBI:49883"/>
    </ligand>
</feature>
<feature type="binding site" evidence="1">
    <location>
        <position position="411"/>
    </location>
    <ligand>
        <name>[4Fe-4S] cluster</name>
        <dbReference type="ChEBI" id="CHEBI:49883"/>
    </ligand>
</feature>
<comment type="function">
    <text evidence="1">Catalyzes the isomerization between 2-isopropylmalate and 3-isopropylmalate, via the formation of 2-isopropylmaleate.</text>
</comment>
<comment type="catalytic activity">
    <reaction evidence="1">
        <text>(2R,3S)-3-isopropylmalate = (2S)-2-isopropylmalate</text>
        <dbReference type="Rhea" id="RHEA:32287"/>
        <dbReference type="ChEBI" id="CHEBI:1178"/>
        <dbReference type="ChEBI" id="CHEBI:35121"/>
        <dbReference type="EC" id="4.2.1.33"/>
    </reaction>
</comment>
<comment type="cofactor">
    <cofactor evidence="1">
        <name>[4Fe-4S] cluster</name>
        <dbReference type="ChEBI" id="CHEBI:49883"/>
    </cofactor>
    <text evidence="1">Binds 1 [4Fe-4S] cluster per subunit.</text>
</comment>
<comment type="pathway">
    <text evidence="1">Amino-acid biosynthesis; L-leucine biosynthesis; L-leucine from 3-methyl-2-oxobutanoate: step 2/4.</text>
</comment>
<comment type="subunit">
    <text evidence="1">Heterodimer of LeuC and LeuD.</text>
</comment>
<comment type="similarity">
    <text evidence="1">Belongs to the aconitase/IPM isomerase family. LeuC type 1 subfamily.</text>
</comment>
<keyword id="KW-0004">4Fe-4S</keyword>
<keyword id="KW-0028">Amino-acid biosynthesis</keyword>
<keyword id="KW-0100">Branched-chain amino acid biosynthesis</keyword>
<keyword id="KW-0408">Iron</keyword>
<keyword id="KW-0411">Iron-sulfur</keyword>
<keyword id="KW-0432">Leucine biosynthesis</keyword>
<keyword id="KW-0456">Lyase</keyword>
<keyword id="KW-0479">Metal-binding</keyword>
<keyword id="KW-1185">Reference proteome</keyword>
<organism>
    <name type="scientific">Methylobacillus flagellatus (strain ATCC 51484 / DSM 6875 / VKM B-1610 / KT)</name>
    <dbReference type="NCBI Taxonomy" id="265072"/>
    <lineage>
        <taxon>Bacteria</taxon>
        <taxon>Pseudomonadati</taxon>
        <taxon>Pseudomonadota</taxon>
        <taxon>Betaproteobacteria</taxon>
        <taxon>Nitrosomonadales</taxon>
        <taxon>Methylophilaceae</taxon>
        <taxon>Methylobacillus</taxon>
    </lineage>
</organism>
<sequence length="468" mass="50109">MSAKTLYDKLFDSHVVREENGAALIYIDRHLVHEVTSPQAFEGLKMAGRKLWRVNSVLAVPDHNVPTTDRSHGIADPISRLQVETLDQNCRDFGVTEFRMGDVRQGIVHVMGPEQGATLPGMTVVCGDSHTSTHGAFGALAHGIGTSEVEHVMATQCLVQKKSKAMQIRVEGQLGPGVTAKDVALAIIGKIGTAGGTGYAIEFAGSAIRSLSMEGRMTLCNMAIEAGARAGMVAVDDVTINYVKGRPYAPKPEQWDAAVAYWRTLHSDEGAKFDAVVEIKAEDIEPQVTWGTSPEMVTAINSIVPDPSKESDPTKRSGMERALQYMGLQPNTPISDIPIDKVFIGSCTNSRIEDLRAAAAVAKGKHVAPNVKLAMVVPGSGLVKAQAEQEGLDKIFKEAGFEWREPGCSMCLAMNADRLEPGERCASTSNRNFEGRQGAGGRTHLVSPGMAAAAAVAGHFIDVRQLLN</sequence>
<protein>
    <recommendedName>
        <fullName evidence="1">3-isopropylmalate dehydratase large subunit</fullName>
        <ecNumber evidence="1">4.2.1.33</ecNumber>
    </recommendedName>
    <alternativeName>
        <fullName evidence="1">Alpha-IPM isomerase</fullName>
        <shortName evidence="1">IPMI</shortName>
    </alternativeName>
    <alternativeName>
        <fullName evidence="1">Isopropylmalate isomerase</fullName>
    </alternativeName>
</protein>
<proteinExistence type="inferred from homology"/>